<comment type="function">
    <text evidence="1">Relaxes both positive and negative superturns and exhibits a strong decatenase activity.</text>
</comment>
<comment type="catalytic activity">
    <reaction evidence="1">
        <text>ATP-dependent breakage, passage and rejoining of double-stranded DNA.</text>
        <dbReference type="EC" id="5.6.2.2"/>
    </reaction>
</comment>
<comment type="cofactor">
    <cofactor evidence="1">
        <name>Mg(2+)</name>
        <dbReference type="ChEBI" id="CHEBI:18420"/>
    </cofactor>
</comment>
<comment type="subunit">
    <text evidence="1">Homodimer. Heterotetramer of two Top6A and two Top6B chains.</text>
</comment>
<comment type="similarity">
    <text evidence="1">Belongs to the TOP6A family.</text>
</comment>
<accession>A2BLE8</accession>
<proteinExistence type="inferred from homology"/>
<reference key="1">
    <citation type="journal article" date="2007" name="Archaea">
        <title>The genome of Hyperthermus butylicus: a sulfur-reducing, peptide fermenting, neutrophilic Crenarchaeote growing up to 108 degrees C.</title>
        <authorList>
            <person name="Bruegger K."/>
            <person name="Chen L."/>
            <person name="Stark M."/>
            <person name="Zibat A."/>
            <person name="Redder P."/>
            <person name="Ruepp A."/>
            <person name="Awayez M."/>
            <person name="She Q."/>
            <person name="Garrett R.A."/>
            <person name="Klenk H.-P."/>
        </authorList>
    </citation>
    <scope>NUCLEOTIDE SEQUENCE [LARGE SCALE GENOMIC DNA]</scope>
    <source>
        <strain>DSM 5456 / JCM 9403 / PLM1-5</strain>
    </source>
</reference>
<keyword id="KW-0067">ATP-binding</keyword>
<keyword id="KW-0238">DNA-binding</keyword>
<keyword id="KW-0413">Isomerase</keyword>
<keyword id="KW-0460">Magnesium</keyword>
<keyword id="KW-0479">Metal-binding</keyword>
<keyword id="KW-0547">Nucleotide-binding</keyword>
<keyword id="KW-1185">Reference proteome</keyword>
<keyword id="KW-0799">Topoisomerase</keyword>
<organism>
    <name type="scientific">Hyperthermus butylicus (strain DSM 5456 / JCM 9403 / PLM1-5)</name>
    <dbReference type="NCBI Taxonomy" id="415426"/>
    <lineage>
        <taxon>Archaea</taxon>
        <taxon>Thermoproteota</taxon>
        <taxon>Thermoprotei</taxon>
        <taxon>Desulfurococcales</taxon>
        <taxon>Pyrodictiaceae</taxon>
        <taxon>Hyperthermus</taxon>
    </lineage>
</organism>
<name>TOP6A_HYPBU</name>
<dbReference type="EC" id="5.6.2.2" evidence="1"/>
<dbReference type="EMBL" id="CP000493">
    <property type="protein sequence ID" value="ABM80809.1"/>
    <property type="molecule type" value="Genomic_DNA"/>
</dbReference>
<dbReference type="RefSeq" id="WP_011822127.1">
    <property type="nucleotide sequence ID" value="NC_008818.1"/>
</dbReference>
<dbReference type="SMR" id="A2BLE8"/>
<dbReference type="STRING" id="415426.Hbut_0961"/>
<dbReference type="EnsemblBacteria" id="ABM80809">
    <property type="protein sequence ID" value="ABM80809"/>
    <property type="gene ID" value="Hbut_0961"/>
</dbReference>
<dbReference type="GeneID" id="4782390"/>
<dbReference type="KEGG" id="hbu:Hbut_0961"/>
<dbReference type="eggNOG" id="arCOG04143">
    <property type="taxonomic scope" value="Archaea"/>
</dbReference>
<dbReference type="HOGENOM" id="CLU_037229_1_0_2"/>
<dbReference type="OrthoDB" id="5866at2157"/>
<dbReference type="Proteomes" id="UP000002593">
    <property type="component" value="Chromosome"/>
</dbReference>
<dbReference type="GO" id="GO:0005694">
    <property type="term" value="C:chromosome"/>
    <property type="evidence" value="ECO:0007669"/>
    <property type="project" value="InterPro"/>
</dbReference>
<dbReference type="GO" id="GO:0005524">
    <property type="term" value="F:ATP binding"/>
    <property type="evidence" value="ECO:0007669"/>
    <property type="project" value="UniProtKB-KW"/>
</dbReference>
<dbReference type="GO" id="GO:0003677">
    <property type="term" value="F:DNA binding"/>
    <property type="evidence" value="ECO:0007669"/>
    <property type="project" value="UniProtKB-UniRule"/>
</dbReference>
<dbReference type="GO" id="GO:0003918">
    <property type="term" value="F:DNA topoisomerase type II (double strand cut, ATP-hydrolyzing) activity"/>
    <property type="evidence" value="ECO:0007669"/>
    <property type="project" value="UniProtKB-UniRule"/>
</dbReference>
<dbReference type="GO" id="GO:0000287">
    <property type="term" value="F:magnesium ion binding"/>
    <property type="evidence" value="ECO:0007669"/>
    <property type="project" value="UniProtKB-UniRule"/>
</dbReference>
<dbReference type="GO" id="GO:0006265">
    <property type="term" value="P:DNA topological change"/>
    <property type="evidence" value="ECO:0007669"/>
    <property type="project" value="UniProtKB-UniRule"/>
</dbReference>
<dbReference type="CDD" id="cd00223">
    <property type="entry name" value="TOPRIM_TopoIIB_SPO"/>
    <property type="match status" value="1"/>
</dbReference>
<dbReference type="FunFam" id="3.40.1360.10:FF:000011">
    <property type="entry name" value="Type 2 DNA topoisomerase 6 subunit A"/>
    <property type="match status" value="1"/>
</dbReference>
<dbReference type="Gene3D" id="3.40.1360.10">
    <property type="match status" value="1"/>
</dbReference>
<dbReference type="Gene3D" id="1.10.10.10">
    <property type="entry name" value="Winged helix-like DNA-binding domain superfamily/Winged helix DNA-binding domain"/>
    <property type="match status" value="1"/>
</dbReference>
<dbReference type="HAMAP" id="MF_00132">
    <property type="entry name" value="Top6A"/>
    <property type="match status" value="1"/>
</dbReference>
<dbReference type="InterPro" id="IPR002815">
    <property type="entry name" value="Spo11/TopoVI_A"/>
</dbReference>
<dbReference type="InterPro" id="IPR013049">
    <property type="entry name" value="Spo11/TopoVI_A_N"/>
</dbReference>
<dbReference type="InterPro" id="IPR036078">
    <property type="entry name" value="Spo11/TopoVI_A_sf"/>
</dbReference>
<dbReference type="InterPro" id="IPR049333">
    <property type="entry name" value="Topo_VI_alpha"/>
</dbReference>
<dbReference type="InterPro" id="IPR004085">
    <property type="entry name" value="TopoVI_A"/>
</dbReference>
<dbReference type="InterPro" id="IPR034136">
    <property type="entry name" value="TOPRIM_Topo6A/Spo11"/>
</dbReference>
<dbReference type="InterPro" id="IPR036388">
    <property type="entry name" value="WH-like_DNA-bd_sf"/>
</dbReference>
<dbReference type="NCBIfam" id="NF003336">
    <property type="entry name" value="PRK04342.1-5"/>
    <property type="match status" value="1"/>
</dbReference>
<dbReference type="PANTHER" id="PTHR10848">
    <property type="entry name" value="MEIOTIC RECOMBINATION PROTEIN SPO11"/>
    <property type="match status" value="1"/>
</dbReference>
<dbReference type="PANTHER" id="PTHR10848:SF0">
    <property type="entry name" value="MEIOTIC RECOMBINATION PROTEIN SPO11"/>
    <property type="match status" value="1"/>
</dbReference>
<dbReference type="Pfam" id="PF21180">
    <property type="entry name" value="TOP6A-Spo11_Toprim"/>
    <property type="match status" value="1"/>
</dbReference>
<dbReference type="Pfam" id="PF20768">
    <property type="entry name" value="Topo_VI_alpha"/>
    <property type="match status" value="1"/>
</dbReference>
<dbReference type="Pfam" id="PF04406">
    <property type="entry name" value="TP6A_N"/>
    <property type="match status" value="1"/>
</dbReference>
<dbReference type="PRINTS" id="PR01550">
    <property type="entry name" value="TOP6AFAMILY"/>
</dbReference>
<dbReference type="PRINTS" id="PR01552">
    <property type="entry name" value="TPISMRASE6A"/>
</dbReference>
<dbReference type="SUPFAM" id="SSF56726">
    <property type="entry name" value="DNA topoisomerase IV, alpha subunit"/>
    <property type="match status" value="1"/>
</dbReference>
<dbReference type="PROSITE" id="PS52041">
    <property type="entry name" value="TOPO_IIB"/>
    <property type="match status" value="1"/>
</dbReference>
<gene>
    <name evidence="1" type="primary">top6A</name>
    <name type="ordered locus">Hbut_0961</name>
</gene>
<sequence length="387" mass="45575">MAEEYVDVVDIEARKKALAVFREKFKEILEQVMRGENPTIMLPKRTLSNTIYDEKRKLLLLGPEKLKRSFFDLHESKKFMQTLLMARIIYEALERNEYPTIRDLYYRGKHTIVYREPGGRRHEENTWDEQRESDAVIRDIEVFTGLLREEMLILSKEKGKVVGNMRIRSGGDIIDLSKMGHGAYAIEPTPDLIEFIDVDAEYVLVVEKDAVFQQLHRIGFWKKHRAILITSAGQPDRATRRFVRRLNEELGLPVYILTDADPYGWYIYSVFKIGSITLSYESERLATPNARFIGVSMTDIFGYKSKKPYLTEQERRNFIIKAKEADIKRAYELKNYKWFQTKKWQIEIDIFLEKKAKLEIEAMTSKGLRFLADKYLPEKIETGDWIE</sequence>
<evidence type="ECO:0000255" key="1">
    <source>
        <dbReference type="HAMAP-Rule" id="MF_00132"/>
    </source>
</evidence>
<evidence type="ECO:0000255" key="2">
    <source>
        <dbReference type="PROSITE-ProRule" id="PRU01385"/>
    </source>
</evidence>
<protein>
    <recommendedName>
        <fullName evidence="1">Type 2 DNA topoisomerase 6 subunit A</fullName>
        <ecNumber evidence="1">5.6.2.2</ecNumber>
    </recommendedName>
    <alternativeName>
        <fullName evidence="1">Type II DNA topoisomerase VI subunit A</fullName>
    </alternativeName>
</protein>
<feature type="chain" id="PRO_1000018314" description="Type 2 DNA topoisomerase 6 subunit A">
    <location>
        <begin position="1"/>
        <end position="387"/>
    </location>
</feature>
<feature type="domain" description="Topo IIA-type catalytic" evidence="2">
    <location>
        <begin position="12"/>
        <end position="160"/>
    </location>
</feature>
<feature type="active site" description="O-(5'-phospho-DNA)-tyrosine intermediate" evidence="2">
    <location>
        <position position="106"/>
    </location>
</feature>
<feature type="binding site" evidence="1">
    <location>
        <position position="207"/>
    </location>
    <ligand>
        <name>Mg(2+)</name>
        <dbReference type="ChEBI" id="CHEBI:18420"/>
    </ligand>
</feature>
<feature type="binding site" evidence="1">
    <location>
        <position position="259"/>
    </location>
    <ligand>
        <name>Mg(2+)</name>
        <dbReference type="ChEBI" id="CHEBI:18420"/>
    </ligand>
</feature>